<accession>Q9KTY2</accession>
<dbReference type="EC" id="2.8.1.7" evidence="1"/>
<dbReference type="EMBL" id="AE003852">
    <property type="protein sequence ID" value="AAF93913.1"/>
    <property type="molecule type" value="Genomic_DNA"/>
</dbReference>
<dbReference type="PIR" id="G82285">
    <property type="entry name" value="G82285"/>
</dbReference>
<dbReference type="RefSeq" id="NP_230397.1">
    <property type="nucleotide sequence ID" value="NC_002505.1"/>
</dbReference>
<dbReference type="RefSeq" id="WP_000775253.1">
    <property type="nucleotide sequence ID" value="NZ_LT906614.1"/>
</dbReference>
<dbReference type="SMR" id="Q9KTY2"/>
<dbReference type="STRING" id="243277.VC_0748"/>
<dbReference type="DNASU" id="2615757"/>
<dbReference type="EnsemblBacteria" id="AAF93913">
    <property type="protein sequence ID" value="AAF93913"/>
    <property type="gene ID" value="VC_0748"/>
</dbReference>
<dbReference type="KEGG" id="vch:VC_0748"/>
<dbReference type="PATRIC" id="fig|243277.26.peg.712"/>
<dbReference type="eggNOG" id="COG1104">
    <property type="taxonomic scope" value="Bacteria"/>
</dbReference>
<dbReference type="HOGENOM" id="CLU_003433_0_2_6"/>
<dbReference type="UniPathway" id="UPA00266"/>
<dbReference type="Proteomes" id="UP000000584">
    <property type="component" value="Chromosome 1"/>
</dbReference>
<dbReference type="GO" id="GO:1990221">
    <property type="term" value="C:L-cysteine desulfurase complex"/>
    <property type="evidence" value="ECO:0007669"/>
    <property type="project" value="UniProtKB-ARBA"/>
</dbReference>
<dbReference type="GO" id="GO:0051537">
    <property type="term" value="F:2 iron, 2 sulfur cluster binding"/>
    <property type="evidence" value="ECO:0007669"/>
    <property type="project" value="UniProtKB-UniRule"/>
</dbReference>
<dbReference type="GO" id="GO:0031071">
    <property type="term" value="F:cysteine desulfurase activity"/>
    <property type="evidence" value="ECO:0007669"/>
    <property type="project" value="UniProtKB-UniRule"/>
</dbReference>
<dbReference type="GO" id="GO:0046872">
    <property type="term" value="F:metal ion binding"/>
    <property type="evidence" value="ECO:0007669"/>
    <property type="project" value="UniProtKB-KW"/>
</dbReference>
<dbReference type="GO" id="GO:0030170">
    <property type="term" value="F:pyridoxal phosphate binding"/>
    <property type="evidence" value="ECO:0007669"/>
    <property type="project" value="UniProtKB-UniRule"/>
</dbReference>
<dbReference type="GO" id="GO:0044571">
    <property type="term" value="P:[2Fe-2S] cluster assembly"/>
    <property type="evidence" value="ECO:0007669"/>
    <property type="project" value="UniProtKB-UniRule"/>
</dbReference>
<dbReference type="FunFam" id="3.40.640.10:FF:000003">
    <property type="entry name" value="Cysteine desulfurase IscS"/>
    <property type="match status" value="1"/>
</dbReference>
<dbReference type="FunFam" id="3.90.1150.10:FF:000002">
    <property type="entry name" value="Cysteine desulfurase IscS"/>
    <property type="match status" value="1"/>
</dbReference>
<dbReference type="Gene3D" id="3.90.1150.10">
    <property type="entry name" value="Aspartate Aminotransferase, domain 1"/>
    <property type="match status" value="1"/>
</dbReference>
<dbReference type="Gene3D" id="3.40.640.10">
    <property type="entry name" value="Type I PLP-dependent aspartate aminotransferase-like (Major domain)"/>
    <property type="match status" value="1"/>
</dbReference>
<dbReference type="HAMAP" id="MF_00331">
    <property type="entry name" value="Cys_desulf_IscS"/>
    <property type="match status" value="1"/>
</dbReference>
<dbReference type="InterPro" id="IPR000192">
    <property type="entry name" value="Aminotrans_V_dom"/>
</dbReference>
<dbReference type="InterPro" id="IPR020578">
    <property type="entry name" value="Aminotrans_V_PyrdxlP_BS"/>
</dbReference>
<dbReference type="InterPro" id="IPR010240">
    <property type="entry name" value="Cys_deSase_IscS"/>
</dbReference>
<dbReference type="InterPro" id="IPR016454">
    <property type="entry name" value="Cysteine_dSase"/>
</dbReference>
<dbReference type="InterPro" id="IPR015424">
    <property type="entry name" value="PyrdxlP-dep_Trfase"/>
</dbReference>
<dbReference type="InterPro" id="IPR015421">
    <property type="entry name" value="PyrdxlP-dep_Trfase_major"/>
</dbReference>
<dbReference type="InterPro" id="IPR015422">
    <property type="entry name" value="PyrdxlP-dep_Trfase_small"/>
</dbReference>
<dbReference type="NCBIfam" id="TIGR02006">
    <property type="entry name" value="IscS"/>
    <property type="match status" value="1"/>
</dbReference>
<dbReference type="NCBIfam" id="NF002806">
    <property type="entry name" value="PRK02948.1"/>
    <property type="match status" value="1"/>
</dbReference>
<dbReference type="NCBIfam" id="NF010611">
    <property type="entry name" value="PRK14012.1"/>
    <property type="match status" value="1"/>
</dbReference>
<dbReference type="PANTHER" id="PTHR11601:SF34">
    <property type="entry name" value="CYSTEINE DESULFURASE"/>
    <property type="match status" value="1"/>
</dbReference>
<dbReference type="PANTHER" id="PTHR11601">
    <property type="entry name" value="CYSTEINE DESULFURYLASE FAMILY MEMBER"/>
    <property type="match status" value="1"/>
</dbReference>
<dbReference type="Pfam" id="PF00266">
    <property type="entry name" value="Aminotran_5"/>
    <property type="match status" value="1"/>
</dbReference>
<dbReference type="PIRSF" id="PIRSF005572">
    <property type="entry name" value="NifS"/>
    <property type="match status" value="1"/>
</dbReference>
<dbReference type="SUPFAM" id="SSF53383">
    <property type="entry name" value="PLP-dependent transferases"/>
    <property type="match status" value="1"/>
</dbReference>
<dbReference type="PROSITE" id="PS00595">
    <property type="entry name" value="AA_TRANSFER_CLASS_5"/>
    <property type="match status" value="1"/>
</dbReference>
<comment type="function">
    <text evidence="1">Master enzyme that delivers sulfur to a number of partners involved in Fe-S cluster assembly, tRNA modification or cofactor biosynthesis. Catalyzes the removal of elemental sulfur atoms from cysteine to produce alanine. Functions as a sulfur delivery protein for Fe-S cluster synthesis onto IscU, an Fe-S scaffold assembly protein, as well as other S acceptor proteins.</text>
</comment>
<comment type="catalytic activity">
    <reaction evidence="1">
        <text>(sulfur carrier)-H + L-cysteine = (sulfur carrier)-SH + L-alanine</text>
        <dbReference type="Rhea" id="RHEA:43892"/>
        <dbReference type="Rhea" id="RHEA-COMP:14737"/>
        <dbReference type="Rhea" id="RHEA-COMP:14739"/>
        <dbReference type="ChEBI" id="CHEBI:29917"/>
        <dbReference type="ChEBI" id="CHEBI:35235"/>
        <dbReference type="ChEBI" id="CHEBI:57972"/>
        <dbReference type="ChEBI" id="CHEBI:64428"/>
        <dbReference type="EC" id="2.8.1.7"/>
    </reaction>
</comment>
<comment type="cofactor">
    <cofactor evidence="1">
        <name>pyridoxal 5'-phosphate</name>
        <dbReference type="ChEBI" id="CHEBI:597326"/>
    </cofactor>
</comment>
<comment type="pathway">
    <text evidence="1">Cofactor biosynthesis; iron-sulfur cluster biosynthesis.</text>
</comment>
<comment type="subunit">
    <text evidence="1">Homodimer. Forms a heterotetramer with IscU, interacts with other sulfur acceptors.</text>
</comment>
<comment type="subcellular location">
    <subcellularLocation>
        <location evidence="1">Cytoplasm</location>
    </subcellularLocation>
</comment>
<comment type="similarity">
    <text evidence="1">Belongs to the class-V pyridoxal-phosphate-dependent aminotransferase family. NifS/IscS subfamily.</text>
</comment>
<evidence type="ECO:0000255" key="1">
    <source>
        <dbReference type="HAMAP-Rule" id="MF_00331"/>
    </source>
</evidence>
<organism>
    <name type="scientific">Vibrio cholerae serotype O1 (strain ATCC 39315 / El Tor Inaba N16961)</name>
    <dbReference type="NCBI Taxonomy" id="243277"/>
    <lineage>
        <taxon>Bacteria</taxon>
        <taxon>Pseudomonadati</taxon>
        <taxon>Pseudomonadota</taxon>
        <taxon>Gammaproteobacteria</taxon>
        <taxon>Vibrionales</taxon>
        <taxon>Vibrionaceae</taxon>
        <taxon>Vibrio</taxon>
    </lineage>
</organism>
<name>ISCS_VIBCH</name>
<protein>
    <recommendedName>
        <fullName evidence="1">Cysteine desulfurase IscS</fullName>
        <ecNumber evidence="1">2.8.1.7</ecNumber>
    </recommendedName>
</protein>
<sequence>MKLPIYLDYSATCPVDPRVAEKMVQYMTMDGTFGNPASRSHRYGWQAEEAVDTAREQIAALLNADPREIVFTSGATESDNLAIKGVAHFYNKQGKHIITSKTEHKAVLDTMRQLEREGFEVTYLDPESNGLVDLAKLEAAMRDDTILVSIMHVNNEIGVVQDIAAIGELCRSRKVVFHVDAAQSAGKVAIDVQEMKVDLISLSAHKAYGPKGIGALYVRRKPRIRLEAQMHGGGHERGFRSGTLPTHQIVGMGEAFRIAKEELQQDYDHALKLRNRLLDGIKDMEAVTINGDLDQRVPHNLNVSFAFVEGESLLMALKDLAVSSGSACTSASLEPSYVLRALGLNDELAHSSIRFSFGRFTTEAEIDYAIELIRVAVDKLRAMSPLWDMYKDGVDLNTVEWAHH</sequence>
<gene>
    <name evidence="1" type="primary">iscS</name>
    <name type="ordered locus">VC_0748</name>
</gene>
<keyword id="KW-0001">2Fe-2S</keyword>
<keyword id="KW-0963">Cytoplasm</keyword>
<keyword id="KW-0408">Iron</keyword>
<keyword id="KW-0411">Iron-sulfur</keyword>
<keyword id="KW-0479">Metal-binding</keyword>
<keyword id="KW-0663">Pyridoxal phosphate</keyword>
<keyword id="KW-1185">Reference proteome</keyword>
<keyword id="KW-0808">Transferase</keyword>
<feature type="chain" id="PRO_0000150281" description="Cysteine desulfurase IscS">
    <location>
        <begin position="1"/>
        <end position="404"/>
    </location>
</feature>
<feature type="active site" description="Cysteine persulfide intermediate" evidence="1">
    <location>
        <position position="328"/>
    </location>
</feature>
<feature type="binding site" evidence="1">
    <location>
        <begin position="75"/>
        <end position="76"/>
    </location>
    <ligand>
        <name>pyridoxal 5'-phosphate</name>
        <dbReference type="ChEBI" id="CHEBI:597326"/>
    </ligand>
</feature>
<feature type="binding site" evidence="1">
    <location>
        <position position="155"/>
    </location>
    <ligand>
        <name>pyridoxal 5'-phosphate</name>
        <dbReference type="ChEBI" id="CHEBI:597326"/>
    </ligand>
</feature>
<feature type="binding site" evidence="1">
    <location>
        <position position="183"/>
    </location>
    <ligand>
        <name>pyridoxal 5'-phosphate</name>
        <dbReference type="ChEBI" id="CHEBI:597326"/>
    </ligand>
</feature>
<feature type="binding site" evidence="1">
    <location>
        <begin position="203"/>
        <end position="205"/>
    </location>
    <ligand>
        <name>pyridoxal 5'-phosphate</name>
        <dbReference type="ChEBI" id="CHEBI:597326"/>
    </ligand>
</feature>
<feature type="binding site" evidence="1">
    <location>
        <position position="243"/>
    </location>
    <ligand>
        <name>pyridoxal 5'-phosphate</name>
        <dbReference type="ChEBI" id="CHEBI:597326"/>
    </ligand>
</feature>
<feature type="binding site" description="via persulfide group" evidence="1">
    <location>
        <position position="328"/>
    </location>
    <ligand>
        <name>[2Fe-2S] cluster</name>
        <dbReference type="ChEBI" id="CHEBI:190135"/>
        <note>ligand shared with IscU</note>
    </ligand>
</feature>
<feature type="modified residue" description="N6-(pyridoxal phosphate)lysine" evidence="1">
    <location>
        <position position="206"/>
    </location>
</feature>
<reference key="1">
    <citation type="journal article" date="2000" name="Nature">
        <title>DNA sequence of both chromosomes of the cholera pathogen Vibrio cholerae.</title>
        <authorList>
            <person name="Heidelberg J.F."/>
            <person name="Eisen J.A."/>
            <person name="Nelson W.C."/>
            <person name="Clayton R.A."/>
            <person name="Gwinn M.L."/>
            <person name="Dodson R.J."/>
            <person name="Haft D.H."/>
            <person name="Hickey E.K."/>
            <person name="Peterson J.D."/>
            <person name="Umayam L.A."/>
            <person name="Gill S.R."/>
            <person name="Nelson K.E."/>
            <person name="Read T.D."/>
            <person name="Tettelin H."/>
            <person name="Richardson D.L."/>
            <person name="Ermolaeva M.D."/>
            <person name="Vamathevan J.J."/>
            <person name="Bass S."/>
            <person name="Qin H."/>
            <person name="Dragoi I."/>
            <person name="Sellers P."/>
            <person name="McDonald L.A."/>
            <person name="Utterback T.R."/>
            <person name="Fleischmann R.D."/>
            <person name="Nierman W.C."/>
            <person name="White O."/>
            <person name="Salzberg S.L."/>
            <person name="Smith H.O."/>
            <person name="Colwell R.R."/>
            <person name="Mekalanos J.J."/>
            <person name="Venter J.C."/>
            <person name="Fraser C.M."/>
        </authorList>
    </citation>
    <scope>NUCLEOTIDE SEQUENCE [LARGE SCALE GENOMIC DNA]</scope>
    <source>
        <strain>ATCC 39315 / El Tor Inaba N16961</strain>
    </source>
</reference>
<proteinExistence type="inferred from homology"/>